<dbReference type="EC" id="7.6.2.-" evidence="1"/>
<dbReference type="EMBL" id="CR954247">
    <property type="protein sequence ID" value="CAI89116.1"/>
    <property type="molecule type" value="Genomic_DNA"/>
</dbReference>
<dbReference type="SMR" id="Q3ICT8"/>
<dbReference type="STRING" id="326442.PSHAb0066"/>
<dbReference type="KEGG" id="pha:PSHAb0066"/>
<dbReference type="PATRIC" id="fig|326442.8.peg.2981"/>
<dbReference type="eggNOG" id="COG4559">
    <property type="taxonomic scope" value="Bacteria"/>
</dbReference>
<dbReference type="HOGENOM" id="CLU_000604_1_11_6"/>
<dbReference type="BioCyc" id="PHAL326442:PSHA_RS15185-MONOMER"/>
<dbReference type="Proteomes" id="UP000006843">
    <property type="component" value="Chromosome II"/>
</dbReference>
<dbReference type="GO" id="GO:0005886">
    <property type="term" value="C:plasma membrane"/>
    <property type="evidence" value="ECO:0007669"/>
    <property type="project" value="UniProtKB-SubCell"/>
</dbReference>
<dbReference type="GO" id="GO:0005524">
    <property type="term" value="F:ATP binding"/>
    <property type="evidence" value="ECO:0007669"/>
    <property type="project" value="UniProtKB-KW"/>
</dbReference>
<dbReference type="GO" id="GO:0016887">
    <property type="term" value="F:ATP hydrolysis activity"/>
    <property type="evidence" value="ECO:0007669"/>
    <property type="project" value="InterPro"/>
</dbReference>
<dbReference type="CDD" id="cd03214">
    <property type="entry name" value="ABC_Iron-Siderophores_B12_Hemin"/>
    <property type="match status" value="1"/>
</dbReference>
<dbReference type="Gene3D" id="3.40.50.300">
    <property type="entry name" value="P-loop containing nucleotide triphosphate hydrolases"/>
    <property type="match status" value="1"/>
</dbReference>
<dbReference type="InterPro" id="IPR003593">
    <property type="entry name" value="AAA+_ATPase"/>
</dbReference>
<dbReference type="InterPro" id="IPR003439">
    <property type="entry name" value="ABC_transporter-like_ATP-bd"/>
</dbReference>
<dbReference type="InterPro" id="IPR017871">
    <property type="entry name" value="ABC_transporter-like_CS"/>
</dbReference>
<dbReference type="InterPro" id="IPR027417">
    <property type="entry name" value="P-loop_NTPase"/>
</dbReference>
<dbReference type="NCBIfam" id="NF010068">
    <property type="entry name" value="PRK13548.1"/>
    <property type="match status" value="1"/>
</dbReference>
<dbReference type="PANTHER" id="PTHR42794">
    <property type="entry name" value="HEMIN IMPORT ATP-BINDING PROTEIN HMUV"/>
    <property type="match status" value="1"/>
</dbReference>
<dbReference type="PANTHER" id="PTHR42794:SF1">
    <property type="entry name" value="HEMIN IMPORT ATP-BINDING PROTEIN HMUV"/>
    <property type="match status" value="1"/>
</dbReference>
<dbReference type="Pfam" id="PF00005">
    <property type="entry name" value="ABC_tran"/>
    <property type="match status" value="1"/>
</dbReference>
<dbReference type="SMART" id="SM00382">
    <property type="entry name" value="AAA"/>
    <property type="match status" value="1"/>
</dbReference>
<dbReference type="SUPFAM" id="SSF52540">
    <property type="entry name" value="P-loop containing nucleoside triphosphate hydrolases"/>
    <property type="match status" value="1"/>
</dbReference>
<dbReference type="PROSITE" id="PS00211">
    <property type="entry name" value="ABC_TRANSPORTER_1"/>
    <property type="match status" value="1"/>
</dbReference>
<dbReference type="PROSITE" id="PS50893">
    <property type="entry name" value="ABC_TRANSPORTER_2"/>
    <property type="match status" value="1"/>
</dbReference>
<dbReference type="PROSITE" id="PS51261">
    <property type="entry name" value="HMUV"/>
    <property type="match status" value="1"/>
</dbReference>
<reference key="1">
    <citation type="journal article" date="2005" name="Genome Res.">
        <title>Coping with cold: the genome of the versatile marine Antarctica bacterium Pseudoalteromonas haloplanktis TAC125.</title>
        <authorList>
            <person name="Medigue C."/>
            <person name="Krin E."/>
            <person name="Pascal G."/>
            <person name="Barbe V."/>
            <person name="Bernsel A."/>
            <person name="Bertin P.N."/>
            <person name="Cheung F."/>
            <person name="Cruveiller S."/>
            <person name="D'Amico S."/>
            <person name="Duilio A."/>
            <person name="Fang G."/>
            <person name="Feller G."/>
            <person name="Ho C."/>
            <person name="Mangenot S."/>
            <person name="Marino G."/>
            <person name="Nilsson J."/>
            <person name="Parrilli E."/>
            <person name="Rocha E.P.C."/>
            <person name="Rouy Z."/>
            <person name="Sekowska A."/>
            <person name="Tutino M.L."/>
            <person name="Vallenet D."/>
            <person name="von Heijne G."/>
            <person name="Danchin A."/>
        </authorList>
    </citation>
    <scope>NUCLEOTIDE SEQUENCE [LARGE SCALE GENOMIC DNA]</scope>
    <source>
        <strain>TAC 125</strain>
    </source>
</reference>
<evidence type="ECO:0000255" key="1">
    <source>
        <dbReference type="HAMAP-Rule" id="MF_01718"/>
    </source>
</evidence>
<keyword id="KW-0067">ATP-binding</keyword>
<keyword id="KW-0997">Cell inner membrane</keyword>
<keyword id="KW-1003">Cell membrane</keyword>
<keyword id="KW-0472">Membrane</keyword>
<keyword id="KW-0547">Nucleotide-binding</keyword>
<keyword id="KW-1185">Reference proteome</keyword>
<keyword id="KW-1278">Translocase</keyword>
<keyword id="KW-0813">Transport</keyword>
<name>HMUV_PSET1</name>
<proteinExistence type="inferred from homology"/>
<sequence>MLCANNVSAQIGQKKLLKHINFYVKPNELVVIIGPNGAGKSSLLKALCGDIKINNGDITLNDRLLSDYSIASLATLRAVLTQNYELDFPFSVAEVVDMAHFAHQADYSKQQLMHFSEQVMQALSVTHLKTHTFTQLSGGEKQRVQLARVLCQIQPSLVANKTPYLLIDEPTSSLDIFHQYDVMAQAKSIASQGAGVVAVIHDLSLAASFADRIYMLNNGEVAACGIPKEVLTPALLKRVYNINARLENNTSEAMPHIQMCY</sequence>
<feature type="chain" id="PRO_0000269611" description="Hemin import ATP-binding protein HmuV">
    <location>
        <begin position="1"/>
        <end position="261"/>
    </location>
</feature>
<feature type="domain" description="ABC transporter" evidence="1">
    <location>
        <begin position="2"/>
        <end position="243"/>
    </location>
</feature>
<feature type="binding site" evidence="1">
    <location>
        <begin position="34"/>
        <end position="41"/>
    </location>
    <ligand>
        <name>ATP</name>
        <dbReference type="ChEBI" id="CHEBI:30616"/>
    </ligand>
</feature>
<gene>
    <name evidence="1" type="primary">hmuV</name>
    <name type="ordered locus">PSHAb0066</name>
</gene>
<accession>Q3ICT8</accession>
<comment type="function">
    <text evidence="1">Part of the ABC transporter complex HmuTUV involved in hemin import. Responsible for energy coupling to the transport system.</text>
</comment>
<comment type="subunit">
    <text evidence="1">The complex is composed of two ATP-binding proteins (HmuV), two transmembrane proteins (HmuU) and a solute-binding protein (HmuT).</text>
</comment>
<comment type="subcellular location">
    <subcellularLocation>
        <location evidence="1">Cell inner membrane</location>
        <topology evidence="1">Peripheral membrane protein</topology>
    </subcellularLocation>
</comment>
<comment type="similarity">
    <text evidence="1">Belongs to the ABC transporter superfamily. Heme (hemin) importer (TC 3.A.1.14.5) family.</text>
</comment>
<organism>
    <name type="scientific">Pseudoalteromonas translucida (strain TAC 125)</name>
    <dbReference type="NCBI Taxonomy" id="326442"/>
    <lineage>
        <taxon>Bacteria</taxon>
        <taxon>Pseudomonadati</taxon>
        <taxon>Pseudomonadota</taxon>
        <taxon>Gammaproteobacteria</taxon>
        <taxon>Alteromonadales</taxon>
        <taxon>Pseudoalteromonadaceae</taxon>
        <taxon>Pseudoalteromonas</taxon>
    </lineage>
</organism>
<protein>
    <recommendedName>
        <fullName evidence="1">Hemin import ATP-binding protein HmuV</fullName>
        <ecNumber evidence="1">7.6.2.-</ecNumber>
    </recommendedName>
</protein>